<organism>
    <name type="scientific">African swine fever virus (strain Badajoz 1971 Vero-adapted)</name>
    <name type="common">Ba71V</name>
    <name type="synonym">ASFV</name>
    <dbReference type="NCBI Taxonomy" id="10498"/>
    <lineage>
        <taxon>Viruses</taxon>
        <taxon>Varidnaviria</taxon>
        <taxon>Bamfordvirae</taxon>
        <taxon>Nucleocytoviricota</taxon>
        <taxon>Pokkesviricetes</taxon>
        <taxon>Asfuvirales</taxon>
        <taxon>Asfarviridae</taxon>
        <taxon>Asfivirus</taxon>
        <taxon>African swine fever virus</taxon>
    </lineage>
</organism>
<comment type="function">
    <text evidence="1">Catalytic component of the DNA-directed RNA polymerase (RNAP) that catalyzes the transcription in the cytoplasm of viral DNA into RNA using the four ribonucleoside triphosphates as substrates (By similarity). Forms the polymerase active center together with RPB2 (By similarity). Part of the core element with the central large cleft, the clamp element that moves to open and close the cleft and the jaws that are thought to grab the incoming DNA template (By similarity).</text>
</comment>
<comment type="catalytic activity">
    <reaction>
        <text>RNA(n) + a ribonucleoside 5'-triphosphate = RNA(n+1) + diphosphate</text>
        <dbReference type="Rhea" id="RHEA:21248"/>
        <dbReference type="Rhea" id="RHEA-COMP:14527"/>
        <dbReference type="Rhea" id="RHEA-COMP:17342"/>
        <dbReference type="ChEBI" id="CHEBI:33019"/>
        <dbReference type="ChEBI" id="CHEBI:61557"/>
        <dbReference type="ChEBI" id="CHEBI:140395"/>
        <dbReference type="EC" id="2.7.7.6"/>
    </reaction>
</comment>
<comment type="subunit">
    <text evidence="5">Part of the viral DNA-directed RNA polymerase that consists of 8 polII-like subunits (RPB1, RPB2, RPB3, RPB5, RPB6, RPB7, RPB9, RPB10), a capping enzyme and a termination factor.</text>
</comment>
<comment type="subcellular location">
    <subcellularLocation>
        <location evidence="2">Virion</location>
    </subcellularLocation>
    <text evidence="2">Found in association with viral nucleoid.</text>
</comment>
<comment type="induction">
    <text evidence="3">Expressed in the late phase of the viral replicative cycle.</text>
</comment>
<comment type="domain">
    <text evidence="5">Lacks the typical C-terminal domain (CTD).</text>
</comment>
<comment type="similarity">
    <text evidence="6">Belongs to the RNA polymerase beta' chain family.</text>
</comment>
<organismHost>
    <name type="scientific">Ornithodoros</name>
    <name type="common">relapsing fever ticks</name>
    <dbReference type="NCBI Taxonomy" id="6937"/>
</organismHost>
<organismHost>
    <name type="scientific">Sus scrofa</name>
    <name type="common">Pig</name>
    <dbReference type="NCBI Taxonomy" id="9823"/>
</organismHost>
<sequence>MEAGYAEIAAVQFNIAGDNDHKRQGVMEVTISNLFEGTLPAEGGIYDARMGTTDHHYKCITCSHQRKQCMGHPGILQMHAPVLQPLFIAEIRRWLRVICLNCGAPIVDLKRYEHLIRPKRLIEAASSQTEGKQCYVCKAVHPKIVKDSEDYFTFWVDQQGKIDKLYPQIIREIFSRVTYDTVVKLGRSKNSHPEKLVLKAIQIPPISIRPGIRLGIGSGPQSFHDINNVIQYLVRKNLLIPKDLQIVRGQKIPLNIDRNLQTIQQLYYNFLLDSVSTTATQGGTGKRGIVMGARPAPSIMRRLPRKEGRIRKSLLGSQVWSISRSTICGNSDLHLDEVGYPISFARTLQVAETVQHYNINRLMPYFLNGKRQYPGCSRVYKQITQSVHDIEGLKQDFRLEVGDILYRDVVTGDVAFFNRQPSLERSSIGVHRIVVLENPKISTFQMNVSACAWYNADFDGDQMNLWVPWSVMSRVEAELLCSVRNWFISTKSSGPVNGQVQDSTVGSFLLTRTNTPMGKNVMNKLHAMGLFQTTQTDPPCFANYSPTDLLDGKSVVSMLLKQTPINYQRAPTWYSEVYAPYMHYNKQDISTQIRNGELIEGVLDKKAVGAGSSGGIYHLISRRYGPQQALKMIFATQQLALNYVRNAGFTVSTADMLLTPEAHQEVQEIINKLLLESEEINNRLLHGDIMPPIGLTTHDFYEKLQLNALKFPDRILKPIMNSINPETNGLFQMVATGAKGSNPNMIHIMAGIGQIEINTQRIQPQFSFGRTLVYYPRFALEAQAYGFICNSYIAGLTSPEFIFGEMNGRFDLINKALSTSSTGYANRKAIFGLQSCIVDYYRRVSIDTRLVQQLYGEDGLDARQLETVRFETIMLSDQELEDKFKYTGIQSPLFEEEFSRLKKDRDKYRQIFLNVENFNFSQLLTDVRQVPVNVASIVKNILLSSTSGVLPFDEKSILQKYAMVKTFCKNLPYVFINNIQERLQTPIPVYLKRAAALMRMLIRIELATVKTLNITCEQMSAILDLIRLQYTQSLINYGEAVGILAAQSVSEPLTQYMLDSHHRSVAGGTNKSGIVRPQEIFSAKPVEAEQSSEMLLRLKNPEVETNKTYAQEIANSIELITFERLILQWHLLYETYSSTKKNVMYPDFASDVEWMTDFLENHPLLQPPEDIANWCIRLELNKTTMILKSISLESIINSLRAKHPNTYIMHSVENTASGIPIIIRIYLRESAFRRSTNTRMATDEKIAVNVVDKLLNSTIRGIPGIKNANVVKLMRHRVDAQGKLVRLDNIYAIKTNGTNIFGAMLDDNIDPYTIVSSSIGDTMELYGIEAARQKIISEIRTVMGDKGPNHRHLLMYADLMTRTGQVTSLEKAGLNAREPSNVLLRMALSSPVQVLTDAAVDSAVNPIYGIAAPTLMGSVPRIGTMYSDIIMDEKYITENYKSVDSMIDML</sequence>
<protein>
    <recommendedName>
        <fullName evidence="4 5">DNA-directed RNA polymerase RPB1 homolog</fullName>
        <shortName evidence="6">RPB1 homolog</shortName>
        <ecNumber>2.7.7.6</ecNumber>
    </recommendedName>
</protein>
<feature type="chain" id="PRO_0000073916" description="DNA-directed RNA polymerase RPB1 homolog">
    <location>
        <begin position="1"/>
        <end position="1450"/>
    </location>
</feature>
<feature type="strand" evidence="7">
    <location>
        <begin position="8"/>
        <end position="15"/>
    </location>
</feature>
<feature type="helix" evidence="7">
    <location>
        <begin position="18"/>
        <end position="24"/>
    </location>
</feature>
<feature type="strand" evidence="8">
    <location>
        <begin position="26"/>
        <end position="28"/>
    </location>
</feature>
<feature type="strand" evidence="7">
    <location>
        <begin position="35"/>
        <end position="40"/>
    </location>
</feature>
<feature type="helix" evidence="7">
    <location>
        <begin position="48"/>
        <end position="50"/>
    </location>
</feature>
<feature type="strand" evidence="7">
    <location>
        <begin position="53"/>
        <end position="57"/>
    </location>
</feature>
<feature type="turn" evidence="7">
    <location>
        <begin position="60"/>
        <end position="62"/>
    </location>
</feature>
<feature type="turn" evidence="8">
    <location>
        <begin position="66"/>
        <end position="68"/>
    </location>
</feature>
<feature type="strand" evidence="7">
    <location>
        <begin position="74"/>
        <end position="83"/>
    </location>
</feature>
<feature type="helix" evidence="7">
    <location>
        <begin position="85"/>
        <end position="87"/>
    </location>
</feature>
<feature type="helix" evidence="7">
    <location>
        <begin position="88"/>
        <end position="95"/>
    </location>
</feature>
<feature type="strand" evidence="7">
    <location>
        <begin position="100"/>
        <end position="107"/>
    </location>
</feature>
<feature type="helix" evidence="7">
    <location>
        <begin position="109"/>
        <end position="111"/>
    </location>
</feature>
<feature type="strand" evidence="7">
    <location>
        <begin position="112"/>
        <end position="115"/>
    </location>
</feature>
<feature type="helix" evidence="7">
    <location>
        <begin position="117"/>
        <end position="119"/>
    </location>
</feature>
<feature type="helix" evidence="7">
    <location>
        <begin position="120"/>
        <end position="126"/>
    </location>
</feature>
<feature type="strand" evidence="7">
    <location>
        <begin position="135"/>
        <end position="138"/>
    </location>
</feature>
<feature type="strand" evidence="7">
    <location>
        <begin position="143"/>
        <end position="146"/>
    </location>
</feature>
<feature type="strand" evidence="7">
    <location>
        <begin position="148"/>
        <end position="152"/>
    </location>
</feature>
<feature type="strand" evidence="7">
    <location>
        <begin position="154"/>
        <end position="158"/>
    </location>
</feature>
<feature type="strand" evidence="7">
    <location>
        <begin position="161"/>
        <end position="164"/>
    </location>
</feature>
<feature type="helix" evidence="7">
    <location>
        <begin position="167"/>
        <end position="175"/>
    </location>
</feature>
<feature type="helix" evidence="7">
    <location>
        <begin position="179"/>
        <end position="184"/>
    </location>
</feature>
<feature type="helix" evidence="7">
    <location>
        <begin position="189"/>
        <end position="191"/>
    </location>
</feature>
<feature type="helix" evidence="7">
    <location>
        <begin position="193"/>
        <end position="196"/>
    </location>
</feature>
<feature type="strand" evidence="7">
    <location>
        <begin position="197"/>
        <end position="203"/>
    </location>
</feature>
<feature type="helix" evidence="7">
    <location>
        <begin position="206"/>
        <end position="208"/>
    </location>
</feature>
<feature type="helix" evidence="7">
    <location>
        <begin position="226"/>
        <end position="239"/>
    </location>
</feature>
<feature type="helix" evidence="7">
    <location>
        <begin position="254"/>
        <end position="272"/>
    </location>
</feature>
<feature type="strand" evidence="7">
    <location>
        <begin position="302"/>
        <end position="305"/>
    </location>
</feature>
<feature type="helix" evidence="7">
    <location>
        <begin position="309"/>
        <end position="312"/>
    </location>
</feature>
<feature type="strand" evidence="7">
    <location>
        <begin position="315"/>
        <end position="329"/>
    </location>
</feature>
<feature type="strand" evidence="7">
    <location>
        <begin position="337"/>
        <end position="341"/>
    </location>
</feature>
<feature type="helix" evidence="7">
    <location>
        <begin position="342"/>
        <end position="347"/>
    </location>
</feature>
<feature type="strand" evidence="7">
    <location>
        <begin position="348"/>
        <end position="353"/>
    </location>
</feature>
<feature type="turn" evidence="7">
    <location>
        <begin position="356"/>
        <end position="358"/>
    </location>
</feature>
<feature type="helix" evidence="7">
    <location>
        <begin position="359"/>
        <end position="368"/>
    </location>
</feature>
<feature type="turn" evidence="7">
    <location>
        <begin position="369"/>
        <end position="371"/>
    </location>
</feature>
<feature type="strand" evidence="7">
    <location>
        <begin position="372"/>
        <end position="374"/>
    </location>
</feature>
<feature type="strand" evidence="7">
    <location>
        <begin position="376"/>
        <end position="381"/>
    </location>
</feature>
<feature type="turn" evidence="7">
    <location>
        <begin position="382"/>
        <end position="385"/>
    </location>
</feature>
<feature type="strand" evidence="7">
    <location>
        <begin position="386"/>
        <end position="390"/>
    </location>
</feature>
<feature type="strand" evidence="7">
    <location>
        <begin position="404"/>
        <end position="408"/>
    </location>
</feature>
<feature type="strand" evidence="7">
    <location>
        <begin position="414"/>
        <end position="418"/>
    </location>
</feature>
<feature type="strand" evidence="7">
    <location>
        <begin position="427"/>
        <end position="436"/>
    </location>
</feature>
<feature type="strand" evidence="7">
    <location>
        <begin position="443"/>
        <end position="446"/>
    </location>
</feature>
<feature type="helix" evidence="7">
    <location>
        <begin position="448"/>
        <end position="450"/>
    </location>
</feature>
<feature type="helix" evidence="7">
    <location>
        <begin position="451"/>
        <end position="454"/>
    </location>
</feature>
<feature type="turn" evidence="7">
    <location>
        <begin position="458"/>
        <end position="460"/>
    </location>
</feature>
<feature type="strand" evidence="7">
    <location>
        <begin position="462"/>
        <end position="466"/>
    </location>
</feature>
<feature type="helix" evidence="7">
    <location>
        <begin position="471"/>
        <end position="479"/>
    </location>
</feature>
<feature type="helix" evidence="7">
    <location>
        <begin position="483"/>
        <end position="486"/>
    </location>
</feature>
<feature type="turn" evidence="7">
    <location>
        <begin position="490"/>
        <end position="492"/>
    </location>
</feature>
<feature type="strand" evidence="7">
    <location>
        <begin position="493"/>
        <end position="495"/>
    </location>
</feature>
<feature type="helix" evidence="7">
    <location>
        <begin position="502"/>
        <end position="511"/>
    </location>
</feature>
<feature type="strand" evidence="7">
    <location>
        <begin position="513"/>
        <end position="515"/>
    </location>
</feature>
<feature type="strand" evidence="8">
    <location>
        <begin position="516"/>
        <end position="519"/>
    </location>
</feature>
<feature type="strand" evidence="8">
    <location>
        <begin position="521"/>
        <end position="523"/>
    </location>
</feature>
<feature type="helix" evidence="7">
    <location>
        <begin position="524"/>
        <end position="530"/>
    </location>
</feature>
<feature type="turn" evidence="7">
    <location>
        <begin position="531"/>
        <end position="533"/>
    </location>
</feature>
<feature type="strand" evidence="8">
    <location>
        <begin position="549"/>
        <end position="551"/>
    </location>
</feature>
<feature type="helix" evidence="7">
    <location>
        <begin position="552"/>
        <end position="561"/>
    </location>
</feature>
<feature type="strand" evidence="7">
    <location>
        <begin position="567"/>
        <end position="569"/>
    </location>
</feature>
<feature type="turn" evidence="7">
    <location>
        <begin position="576"/>
        <end position="578"/>
    </location>
</feature>
<feature type="helix" evidence="7">
    <location>
        <begin position="579"/>
        <end position="581"/>
    </location>
</feature>
<feature type="turn" evidence="7">
    <location>
        <begin position="586"/>
        <end position="589"/>
    </location>
</feature>
<feature type="strand" evidence="7">
    <location>
        <begin position="590"/>
        <end position="594"/>
    </location>
</feature>
<feature type="strand" evidence="7">
    <location>
        <begin position="597"/>
        <end position="600"/>
    </location>
</feature>
<feature type="helix" evidence="7">
    <location>
        <begin position="605"/>
        <end position="608"/>
    </location>
</feature>
<feature type="helix" evidence="7">
    <location>
        <begin position="616"/>
        <end position="624"/>
    </location>
</feature>
<feature type="helix" evidence="7">
    <location>
        <begin position="626"/>
        <end position="646"/>
    </location>
</feature>
<feature type="helix" evidence="7">
    <location>
        <begin position="654"/>
        <end position="656"/>
    </location>
</feature>
<feature type="helix" evidence="7">
    <location>
        <begin position="660"/>
        <end position="686"/>
    </location>
</feature>
<feature type="helix" evidence="7">
    <location>
        <begin position="697"/>
        <end position="708"/>
    </location>
</feature>
<feature type="helix" evidence="7">
    <location>
        <begin position="713"/>
        <end position="715"/>
    </location>
</feature>
<feature type="helix" evidence="7">
    <location>
        <begin position="716"/>
        <end position="722"/>
    </location>
</feature>
<feature type="turn" evidence="7">
    <location>
        <begin position="725"/>
        <end position="727"/>
    </location>
</feature>
<feature type="helix" evidence="7">
    <location>
        <begin position="729"/>
        <end position="735"/>
    </location>
</feature>
<feature type="helix" evidence="7">
    <location>
        <begin position="742"/>
        <end position="748"/>
    </location>
</feature>
<feature type="strand" evidence="8">
    <location>
        <begin position="766"/>
        <end position="769"/>
    </location>
</feature>
<feature type="strand" evidence="7">
    <location>
        <begin position="770"/>
        <end position="772"/>
    </location>
</feature>
<feature type="helix" evidence="7">
    <location>
        <begin position="782"/>
        <end position="785"/>
    </location>
</feature>
<feature type="turn" evidence="7">
    <location>
        <begin position="792"/>
        <end position="794"/>
    </location>
</feature>
<feature type="helix" evidence="7">
    <location>
        <begin position="798"/>
        <end position="833"/>
    </location>
</feature>
<feature type="strand" evidence="7">
    <location>
        <begin position="844"/>
        <end position="846"/>
    </location>
</feature>
<feature type="strand" evidence="7">
    <location>
        <begin position="849"/>
        <end position="854"/>
    </location>
</feature>
<feature type="helix" evidence="7">
    <location>
        <begin position="855"/>
        <end position="857"/>
    </location>
</feature>
<feature type="strand" evidence="7">
    <location>
        <begin position="866"/>
        <end position="869"/>
    </location>
</feature>
<feature type="turn" evidence="8">
    <location>
        <begin position="872"/>
        <end position="874"/>
    </location>
</feature>
<feature type="helix" evidence="7">
    <location>
        <begin position="877"/>
        <end position="884"/>
    </location>
</feature>
<feature type="helix" evidence="7">
    <location>
        <begin position="892"/>
        <end position="917"/>
    </location>
</feature>
<feature type="strand" evidence="7">
    <location>
        <begin position="919"/>
        <end position="921"/>
    </location>
</feature>
<feature type="strand" evidence="7">
    <location>
        <begin position="926"/>
        <end position="931"/>
    </location>
</feature>
<feature type="helix" evidence="7">
    <location>
        <begin position="934"/>
        <end position="944"/>
    </location>
</feature>
<feature type="helix" evidence="7">
    <location>
        <begin position="954"/>
        <end position="970"/>
    </location>
</feature>
<feature type="helix" evidence="7">
    <location>
        <begin position="971"/>
        <end position="974"/>
    </location>
</feature>
<feature type="helix" evidence="7">
    <location>
        <begin position="978"/>
        <end position="983"/>
    </location>
</feature>
<feature type="helix" evidence="7">
    <location>
        <begin position="989"/>
        <end position="1005"/>
    </location>
</feature>
<feature type="turn" evidence="7">
    <location>
        <begin position="1008"/>
        <end position="1010"/>
    </location>
</feature>
<feature type="helix" evidence="7">
    <location>
        <begin position="1016"/>
        <end position="1032"/>
    </location>
</feature>
<feature type="helix" evidence="7">
    <location>
        <begin position="1041"/>
        <end position="1050"/>
    </location>
</feature>
<feature type="helix" evidence="7">
    <location>
        <begin position="1053"/>
        <end position="1061"/>
    </location>
</feature>
<feature type="turn" evidence="7">
    <location>
        <begin position="1062"/>
        <end position="1065"/>
    </location>
</feature>
<feature type="strand" evidence="7">
    <location>
        <begin position="1066"/>
        <end position="1068"/>
    </location>
</feature>
<feature type="helix" evidence="7">
    <location>
        <begin position="1075"/>
        <end position="1082"/>
    </location>
</feature>
<feature type="turn" evidence="7">
    <location>
        <begin position="1086"/>
        <end position="1088"/>
    </location>
</feature>
<feature type="strand" evidence="7">
    <location>
        <begin position="1094"/>
        <end position="1100"/>
    </location>
</feature>
<feature type="helix" evidence="7">
    <location>
        <begin position="1103"/>
        <end position="1105"/>
    </location>
</feature>
<feature type="helix" evidence="7">
    <location>
        <begin position="1107"/>
        <end position="1117"/>
    </location>
</feature>
<feature type="helix" evidence="7">
    <location>
        <begin position="1122"/>
        <end position="1125"/>
    </location>
</feature>
<feature type="strand" evidence="7">
    <location>
        <begin position="1126"/>
        <end position="1131"/>
    </location>
</feature>
<feature type="strand" evidence="7">
    <location>
        <begin position="1138"/>
        <end position="1140"/>
    </location>
</feature>
<feature type="helix" evidence="7">
    <location>
        <begin position="1149"/>
        <end position="1151"/>
    </location>
</feature>
<feature type="helix" evidence="7">
    <location>
        <begin position="1152"/>
        <end position="1161"/>
    </location>
</feature>
<feature type="strand" evidence="7">
    <location>
        <begin position="1171"/>
        <end position="1180"/>
    </location>
</feature>
<feature type="helix" evidence="7">
    <location>
        <begin position="1182"/>
        <end position="1188"/>
    </location>
</feature>
<feature type="helix" evidence="7">
    <location>
        <begin position="1192"/>
        <end position="1202"/>
    </location>
</feature>
<feature type="strand" evidence="7">
    <location>
        <begin position="1204"/>
        <end position="1210"/>
    </location>
</feature>
<feature type="strand" evidence="7">
    <location>
        <begin position="1222"/>
        <end position="1228"/>
    </location>
</feature>
<feature type="helix" evidence="7">
    <location>
        <begin position="1229"/>
        <end position="1232"/>
    </location>
</feature>
<feature type="strand" evidence="7">
    <location>
        <begin position="1235"/>
        <end position="1239"/>
    </location>
</feature>
<feature type="helix" evidence="7">
    <location>
        <begin position="1243"/>
        <end position="1255"/>
    </location>
</feature>
<feature type="strand" evidence="7">
    <location>
        <begin position="1258"/>
        <end position="1261"/>
    </location>
</feature>
<feature type="strand" evidence="7">
    <location>
        <begin position="1268"/>
        <end position="1278"/>
    </location>
</feature>
<feature type="strand" evidence="7">
    <location>
        <begin position="1284"/>
        <end position="1297"/>
    </location>
</feature>
<feature type="helix" evidence="7">
    <location>
        <begin position="1300"/>
        <end position="1305"/>
    </location>
</feature>
<feature type="strand" evidence="7">
    <location>
        <begin position="1307"/>
        <end position="1309"/>
    </location>
</feature>
<feature type="helix" evidence="7">
    <location>
        <begin position="1311"/>
        <end position="1313"/>
    </location>
</feature>
<feature type="strand" evidence="7">
    <location>
        <begin position="1315"/>
        <end position="1317"/>
    </location>
</feature>
<feature type="helix" evidence="7">
    <location>
        <begin position="1319"/>
        <end position="1325"/>
    </location>
</feature>
<feature type="helix" evidence="7">
    <location>
        <begin position="1328"/>
        <end position="1343"/>
    </location>
</feature>
<feature type="helix" evidence="7">
    <location>
        <begin position="1350"/>
        <end position="1360"/>
    </location>
</feature>
<feature type="turn" evidence="7">
    <location>
        <begin position="1361"/>
        <end position="1363"/>
    </location>
</feature>
<feature type="helix" evidence="7">
    <location>
        <begin position="1371"/>
        <end position="1377"/>
    </location>
</feature>
<feature type="helix" evidence="7">
    <location>
        <begin position="1382"/>
        <end position="1388"/>
    </location>
</feature>
<feature type="helix" evidence="7">
    <location>
        <begin position="1391"/>
        <end position="1401"/>
    </location>
</feature>
<feature type="strand" evidence="7">
    <location>
        <begin position="1404"/>
        <end position="1406"/>
    </location>
</feature>
<feature type="helix" evidence="7">
    <location>
        <begin position="1411"/>
        <end position="1415"/>
    </location>
</feature>
<feature type="helix" evidence="7">
    <location>
        <begin position="1423"/>
        <end position="1425"/>
    </location>
</feature>
<feature type="strand" evidence="7">
    <location>
        <begin position="1426"/>
        <end position="1431"/>
    </location>
</feature>
<feature type="helix" evidence="7">
    <location>
        <begin position="1433"/>
        <end position="1439"/>
    </location>
</feature>
<accession>P42486</accession>
<keyword id="KW-0002">3D-structure</keyword>
<keyword id="KW-0240">DNA-directed RNA polymerase</keyword>
<keyword id="KW-0426">Late protein</keyword>
<keyword id="KW-0548">Nucleotidyltransferase</keyword>
<keyword id="KW-1185">Reference proteome</keyword>
<keyword id="KW-0804">Transcription</keyword>
<keyword id="KW-0808">Transferase</keyword>
<keyword id="KW-1195">Viral transcription</keyword>
<keyword id="KW-0946">Virion</keyword>
<evidence type="ECO:0000250" key="1">
    <source>
        <dbReference type="UniProtKB" id="P24928"/>
    </source>
</evidence>
<evidence type="ECO:0000269" key="2">
    <source>
    </source>
</evidence>
<evidence type="ECO:0000269" key="3">
    <source>
    </source>
</evidence>
<evidence type="ECO:0000303" key="4">
    <source>
    </source>
</evidence>
<evidence type="ECO:0000303" key="5">
    <source>
    </source>
</evidence>
<evidence type="ECO:0000305" key="6"/>
<evidence type="ECO:0007829" key="7">
    <source>
        <dbReference type="PDB" id="8Q3B"/>
    </source>
</evidence>
<evidence type="ECO:0007829" key="8">
    <source>
        <dbReference type="PDB" id="8Q3K"/>
    </source>
</evidence>
<proteinExistence type="evidence at protein level"/>
<reference key="1">
    <citation type="journal article" date="1993" name="Nucleic Acids Res.">
        <title>African swine fever virus encodes two genes which share significant homology with the two largest subunits of DNA-dependent RNA polymerases.</title>
        <authorList>
            <person name="Yanez R.J."/>
            <person name="Boursnell M.E."/>
            <person name="Nogal M.L."/>
            <person name="Yuste L."/>
            <person name="Vinuela E."/>
        </authorList>
    </citation>
    <scope>NUCLEOTIDE SEQUENCE [GENOMIC DNA]</scope>
    <scope>INDUCTION</scope>
</reference>
<reference key="2">
    <citation type="journal article" date="1995" name="Virology">
        <title>Analysis of the complete nucleotide sequence of African swine fever virus.</title>
        <authorList>
            <person name="Yanez R.J."/>
            <person name="Rodriguez J.M."/>
            <person name="Nogal M.L."/>
            <person name="Yuste L."/>
            <person name="Enriquez C."/>
            <person name="Rodriguez J.F."/>
            <person name="Vinuela E."/>
        </authorList>
    </citation>
    <scope>NUCLEOTIDE SEQUENCE [LARGE SCALE GENOMIC DNA]</scope>
</reference>
<reference key="3">
    <citation type="journal article" date="2013" name="Virus Res.">
        <title>African swine fever virus transcription.</title>
        <authorList>
            <person name="Rodriguez J.M."/>
            <person name="Salas M.L."/>
        </authorList>
    </citation>
    <scope>REVIEW</scope>
</reference>
<reference key="4">
    <citation type="journal article" date="2018" name="J. Virol.">
        <title>A Proteomic Atlas of the African Swine Fever Virus Particle.</title>
        <authorList>
            <person name="Alejo A."/>
            <person name="Matamoros T."/>
            <person name="Guerra M."/>
            <person name="Andres G."/>
        </authorList>
    </citation>
    <scope>SUBCELLULAR LOCATION</scope>
</reference>
<reference key="5">
    <citation type="journal article" date="2020" name="Biochem. Soc. Trans.">
        <title>Transcriptome view of a killer: African swine fever virus.</title>
        <authorList>
            <person name="Cackett G."/>
            <person name="Sykora M."/>
            <person name="Werner F."/>
        </authorList>
    </citation>
    <scope>REVIEW</scope>
</reference>
<gene>
    <name type="ordered locus">Ba71V-99</name>
    <name type="ORF">NP1450L</name>
</gene>
<name>RPB1_ASFB7</name>
<dbReference type="EC" id="2.7.7.6"/>
<dbReference type="EMBL" id="Z21489">
    <property type="protein sequence ID" value="CAA79697.1"/>
    <property type="molecule type" value="Genomic_DNA"/>
</dbReference>
<dbReference type="EMBL" id="U18466">
    <property type="protein sequence ID" value="AAA65328.1"/>
    <property type="molecule type" value="Genomic_DNA"/>
</dbReference>
<dbReference type="PIR" id="S78060">
    <property type="entry name" value="S78060"/>
</dbReference>
<dbReference type="RefSeq" id="NP_042792.1">
    <property type="nucleotide sequence ID" value="NC_001659.2"/>
</dbReference>
<dbReference type="PDB" id="8Q3B">
    <property type="method" value="EM"/>
    <property type="resolution" value="2.69 A"/>
    <property type="chains" value="A=1-1450"/>
</dbReference>
<dbReference type="PDB" id="8Q3K">
    <property type="method" value="EM"/>
    <property type="resolution" value="2.92 A"/>
    <property type="chains" value="A=1-1450"/>
</dbReference>
<dbReference type="PDB" id="8XX4">
    <property type="method" value="EM"/>
    <property type="resolution" value="2.60 A"/>
    <property type="chains" value="A=1-1441"/>
</dbReference>
<dbReference type="PDB" id="8XX5">
    <property type="method" value="EM"/>
    <property type="resolution" value="2.40 A"/>
    <property type="chains" value="A=1-1440"/>
</dbReference>
<dbReference type="PDB" id="8XXP">
    <property type="method" value="EM"/>
    <property type="resolution" value="2.60 A"/>
    <property type="chains" value="A=1-1441"/>
</dbReference>
<dbReference type="PDB" id="8XXT">
    <property type="method" value="EM"/>
    <property type="resolution" value="2.85 A"/>
    <property type="chains" value="A=1-1441"/>
</dbReference>
<dbReference type="PDB" id="8XY6">
    <property type="method" value="EM"/>
    <property type="resolution" value="3.00 A"/>
    <property type="chains" value="A=1-1441"/>
</dbReference>
<dbReference type="PDB" id="8Y0E">
    <property type="method" value="EM"/>
    <property type="resolution" value="3.00 A"/>
    <property type="chains" value="A=1-1450"/>
</dbReference>
<dbReference type="PDB" id="8YQT">
    <property type="method" value="EM"/>
    <property type="resolution" value="2.56 A"/>
    <property type="chains" value="A=1-1450"/>
</dbReference>
<dbReference type="PDB" id="8YQU">
    <property type="method" value="EM"/>
    <property type="resolution" value="2.85 A"/>
    <property type="chains" value="A=1-1450"/>
</dbReference>
<dbReference type="PDB" id="8YQV">
    <property type="method" value="EM"/>
    <property type="resolution" value="2.67 A"/>
    <property type="chains" value="A=1-1450"/>
</dbReference>
<dbReference type="PDB" id="8YQW">
    <property type="method" value="EM"/>
    <property type="resolution" value="2.68 A"/>
    <property type="chains" value="A=1-1450"/>
</dbReference>
<dbReference type="PDB" id="8YQX">
    <property type="method" value="EM"/>
    <property type="resolution" value="2.97 A"/>
    <property type="chains" value="A=1-1450"/>
</dbReference>
<dbReference type="PDB" id="8YQY">
    <property type="method" value="EM"/>
    <property type="resolution" value="3.68 A"/>
    <property type="chains" value="A=1-1450"/>
</dbReference>
<dbReference type="PDB" id="8YQZ">
    <property type="method" value="EM"/>
    <property type="resolution" value="2.78 A"/>
    <property type="chains" value="A=1-1450"/>
</dbReference>
<dbReference type="PDBsum" id="8Q3B"/>
<dbReference type="PDBsum" id="8Q3K"/>
<dbReference type="PDBsum" id="8XX4"/>
<dbReference type="PDBsum" id="8XX5"/>
<dbReference type="PDBsum" id="8XXP"/>
<dbReference type="PDBsum" id="8XXT"/>
<dbReference type="PDBsum" id="8XY6"/>
<dbReference type="PDBsum" id="8Y0E"/>
<dbReference type="PDBsum" id="8YQT"/>
<dbReference type="PDBsum" id="8YQU"/>
<dbReference type="PDBsum" id="8YQV"/>
<dbReference type="PDBsum" id="8YQW"/>
<dbReference type="PDBsum" id="8YQX"/>
<dbReference type="PDBsum" id="8YQY"/>
<dbReference type="PDBsum" id="8YQZ"/>
<dbReference type="EMDB" id="EMD-18120"/>
<dbReference type="EMDB" id="EMD-18129"/>
<dbReference type="SMR" id="P42486"/>
<dbReference type="GeneID" id="22220328"/>
<dbReference type="KEGG" id="vg:22220328"/>
<dbReference type="Proteomes" id="UP000000624">
    <property type="component" value="Segment"/>
</dbReference>
<dbReference type="GO" id="GO:0000428">
    <property type="term" value="C:DNA-directed RNA polymerase complex"/>
    <property type="evidence" value="ECO:0007669"/>
    <property type="project" value="UniProtKB-KW"/>
</dbReference>
<dbReference type="GO" id="GO:0044423">
    <property type="term" value="C:virion component"/>
    <property type="evidence" value="ECO:0007669"/>
    <property type="project" value="UniProtKB-KW"/>
</dbReference>
<dbReference type="GO" id="GO:0003677">
    <property type="term" value="F:DNA binding"/>
    <property type="evidence" value="ECO:0007669"/>
    <property type="project" value="InterPro"/>
</dbReference>
<dbReference type="GO" id="GO:0003899">
    <property type="term" value="F:DNA-directed RNA polymerase activity"/>
    <property type="evidence" value="ECO:0007669"/>
    <property type="project" value="UniProtKB-EC"/>
</dbReference>
<dbReference type="GO" id="GO:0006351">
    <property type="term" value="P:DNA-templated transcription"/>
    <property type="evidence" value="ECO:0007669"/>
    <property type="project" value="InterPro"/>
</dbReference>
<dbReference type="GO" id="GO:0039695">
    <property type="term" value="P:DNA-templated viral transcription"/>
    <property type="evidence" value="ECO:0000303"/>
    <property type="project" value="UniProtKB"/>
</dbReference>
<dbReference type="Gene3D" id="1.10.132.30">
    <property type="match status" value="1"/>
</dbReference>
<dbReference type="Gene3D" id="2.40.40.20">
    <property type="match status" value="1"/>
</dbReference>
<dbReference type="Gene3D" id="3.30.1360.140">
    <property type="match status" value="1"/>
</dbReference>
<dbReference type="Gene3D" id="6.10.250.2940">
    <property type="match status" value="1"/>
</dbReference>
<dbReference type="Gene3D" id="3.30.1490.180">
    <property type="entry name" value="RNA polymerase ii"/>
    <property type="match status" value="1"/>
</dbReference>
<dbReference type="Gene3D" id="4.10.860.120">
    <property type="entry name" value="RNA polymerase II, clamp domain"/>
    <property type="match status" value="1"/>
</dbReference>
<dbReference type="Gene3D" id="1.10.274.100">
    <property type="entry name" value="RNA polymerase Rpb1, domain 3"/>
    <property type="match status" value="1"/>
</dbReference>
<dbReference type="InterPro" id="IPR045867">
    <property type="entry name" value="DNA-dir_RpoC_beta_prime"/>
</dbReference>
<dbReference type="InterPro" id="IPR000722">
    <property type="entry name" value="RNA_pol_asu"/>
</dbReference>
<dbReference type="InterPro" id="IPR006592">
    <property type="entry name" value="RNA_pol_N"/>
</dbReference>
<dbReference type="InterPro" id="IPR007080">
    <property type="entry name" value="RNA_pol_Rpb1_1"/>
</dbReference>
<dbReference type="InterPro" id="IPR007066">
    <property type="entry name" value="RNA_pol_Rpb1_3"/>
</dbReference>
<dbReference type="InterPro" id="IPR042102">
    <property type="entry name" value="RNA_pol_Rpb1_3_sf"/>
</dbReference>
<dbReference type="InterPro" id="IPR007083">
    <property type="entry name" value="RNA_pol_Rpb1_4"/>
</dbReference>
<dbReference type="InterPro" id="IPR007081">
    <property type="entry name" value="RNA_pol_Rpb1_5"/>
</dbReference>
<dbReference type="InterPro" id="IPR007073">
    <property type="entry name" value="RNA_pol_Rpb1_7"/>
</dbReference>
<dbReference type="InterPro" id="IPR038593">
    <property type="entry name" value="RNA_pol_Rpb1_7_sf"/>
</dbReference>
<dbReference type="InterPro" id="IPR044893">
    <property type="entry name" value="RNA_pol_Rpb1_clamp_domain"/>
</dbReference>
<dbReference type="InterPro" id="IPR038120">
    <property type="entry name" value="Rpb1_funnel_sf"/>
</dbReference>
<dbReference type="PANTHER" id="PTHR19376">
    <property type="entry name" value="DNA-DIRECTED RNA POLYMERASE"/>
    <property type="match status" value="1"/>
</dbReference>
<dbReference type="PANTHER" id="PTHR19376:SF11">
    <property type="entry name" value="DNA-DIRECTED RNA POLYMERASE I SUBUNIT RPA1"/>
    <property type="match status" value="1"/>
</dbReference>
<dbReference type="Pfam" id="PF04997">
    <property type="entry name" value="RNA_pol_Rpb1_1"/>
    <property type="match status" value="1"/>
</dbReference>
<dbReference type="Pfam" id="PF00623">
    <property type="entry name" value="RNA_pol_Rpb1_2"/>
    <property type="match status" value="1"/>
</dbReference>
<dbReference type="Pfam" id="PF04983">
    <property type="entry name" value="RNA_pol_Rpb1_3"/>
    <property type="match status" value="1"/>
</dbReference>
<dbReference type="Pfam" id="PF05000">
    <property type="entry name" value="RNA_pol_Rpb1_4"/>
    <property type="match status" value="1"/>
</dbReference>
<dbReference type="Pfam" id="PF04998">
    <property type="entry name" value="RNA_pol_Rpb1_5"/>
    <property type="match status" value="1"/>
</dbReference>
<dbReference type="Pfam" id="PF04990">
    <property type="entry name" value="RNA_pol_Rpb1_7"/>
    <property type="match status" value="1"/>
</dbReference>
<dbReference type="SMART" id="SM00663">
    <property type="entry name" value="RPOLA_N"/>
    <property type="match status" value="1"/>
</dbReference>
<dbReference type="SUPFAM" id="SSF64484">
    <property type="entry name" value="beta and beta-prime subunits of DNA dependent RNA-polymerase"/>
    <property type="match status" value="1"/>
</dbReference>